<feature type="chain" id="PRO_1000047147" description="2,3,4,5-tetrahydropyridine-2,6-dicarboxylate N-succinyltransferase">
    <location>
        <begin position="1"/>
        <end position="274"/>
    </location>
</feature>
<feature type="binding site" evidence="1">
    <location>
        <position position="104"/>
    </location>
    <ligand>
        <name>substrate</name>
    </ligand>
</feature>
<feature type="binding site" evidence="1">
    <location>
        <position position="141"/>
    </location>
    <ligand>
        <name>substrate</name>
    </ligand>
</feature>
<dbReference type="EC" id="2.3.1.117" evidence="1"/>
<dbReference type="EMBL" id="CP000647">
    <property type="protein sequence ID" value="ABR75639.1"/>
    <property type="molecule type" value="Genomic_DNA"/>
</dbReference>
<dbReference type="RefSeq" id="WP_002889295.1">
    <property type="nucleotide sequence ID" value="NC_009648.1"/>
</dbReference>
<dbReference type="SMR" id="A6T4W8"/>
<dbReference type="STRING" id="272620.KPN_00179"/>
<dbReference type="jPOST" id="A6T4W8"/>
<dbReference type="PaxDb" id="272620-KPN_00179"/>
<dbReference type="EnsemblBacteria" id="ABR75639">
    <property type="protein sequence ID" value="ABR75639"/>
    <property type="gene ID" value="KPN_00179"/>
</dbReference>
<dbReference type="GeneID" id="93274925"/>
<dbReference type="KEGG" id="kpn:KPN_00179"/>
<dbReference type="HOGENOM" id="CLU_050859_0_1_6"/>
<dbReference type="UniPathway" id="UPA00034">
    <property type="reaction ID" value="UER00019"/>
</dbReference>
<dbReference type="Proteomes" id="UP000000265">
    <property type="component" value="Chromosome"/>
</dbReference>
<dbReference type="GO" id="GO:0005737">
    <property type="term" value="C:cytoplasm"/>
    <property type="evidence" value="ECO:0007669"/>
    <property type="project" value="UniProtKB-SubCell"/>
</dbReference>
<dbReference type="GO" id="GO:0008666">
    <property type="term" value="F:2,3,4,5-tetrahydropyridine-2,6-dicarboxylate N-succinyltransferase activity"/>
    <property type="evidence" value="ECO:0007669"/>
    <property type="project" value="UniProtKB-UniRule"/>
</dbReference>
<dbReference type="GO" id="GO:0016779">
    <property type="term" value="F:nucleotidyltransferase activity"/>
    <property type="evidence" value="ECO:0007669"/>
    <property type="project" value="TreeGrafter"/>
</dbReference>
<dbReference type="GO" id="GO:0019877">
    <property type="term" value="P:diaminopimelate biosynthetic process"/>
    <property type="evidence" value="ECO:0007669"/>
    <property type="project" value="UniProtKB-UniRule"/>
</dbReference>
<dbReference type="GO" id="GO:0009089">
    <property type="term" value="P:lysine biosynthetic process via diaminopimelate"/>
    <property type="evidence" value="ECO:0007669"/>
    <property type="project" value="UniProtKB-UniRule"/>
</dbReference>
<dbReference type="CDD" id="cd03350">
    <property type="entry name" value="LbH_THP_succinylT"/>
    <property type="match status" value="1"/>
</dbReference>
<dbReference type="FunFam" id="2.160.10.10:FF:000004">
    <property type="entry name" value="2,3,4,5-tetrahydropyridine-2,6-dicarboxylate N-succinyltransferase"/>
    <property type="match status" value="1"/>
</dbReference>
<dbReference type="Gene3D" id="2.160.10.10">
    <property type="entry name" value="Hexapeptide repeat proteins"/>
    <property type="match status" value="1"/>
</dbReference>
<dbReference type="Gene3D" id="1.10.166.10">
    <property type="entry name" value="Tetrahydrodipicolinate-N-succinyltransferase, N-terminal domain"/>
    <property type="match status" value="1"/>
</dbReference>
<dbReference type="HAMAP" id="MF_00811">
    <property type="entry name" value="DapD"/>
    <property type="match status" value="1"/>
</dbReference>
<dbReference type="InterPro" id="IPR005664">
    <property type="entry name" value="DapD_Trfase_Hexpep_rpt_fam"/>
</dbReference>
<dbReference type="InterPro" id="IPR001451">
    <property type="entry name" value="Hexapep"/>
</dbReference>
<dbReference type="InterPro" id="IPR018357">
    <property type="entry name" value="Hexapep_transf_CS"/>
</dbReference>
<dbReference type="InterPro" id="IPR023180">
    <property type="entry name" value="THP_succinylTrfase_dom1"/>
</dbReference>
<dbReference type="InterPro" id="IPR037133">
    <property type="entry name" value="THP_succinylTrfase_N_sf"/>
</dbReference>
<dbReference type="InterPro" id="IPR011004">
    <property type="entry name" value="Trimer_LpxA-like_sf"/>
</dbReference>
<dbReference type="NCBIfam" id="TIGR00965">
    <property type="entry name" value="dapD"/>
    <property type="match status" value="1"/>
</dbReference>
<dbReference type="NCBIfam" id="NF008808">
    <property type="entry name" value="PRK11830.1"/>
    <property type="match status" value="1"/>
</dbReference>
<dbReference type="PANTHER" id="PTHR19136:SF52">
    <property type="entry name" value="2,3,4,5-TETRAHYDROPYRIDINE-2,6-DICARBOXYLATE N-SUCCINYLTRANSFERASE"/>
    <property type="match status" value="1"/>
</dbReference>
<dbReference type="PANTHER" id="PTHR19136">
    <property type="entry name" value="MOLYBDENUM COFACTOR GUANYLYLTRANSFERASE"/>
    <property type="match status" value="1"/>
</dbReference>
<dbReference type="Pfam" id="PF14602">
    <property type="entry name" value="Hexapep_2"/>
    <property type="match status" value="1"/>
</dbReference>
<dbReference type="Pfam" id="PF14805">
    <property type="entry name" value="THDPS_N_2"/>
    <property type="match status" value="1"/>
</dbReference>
<dbReference type="SUPFAM" id="SSF51161">
    <property type="entry name" value="Trimeric LpxA-like enzymes"/>
    <property type="match status" value="1"/>
</dbReference>
<dbReference type="PROSITE" id="PS00101">
    <property type="entry name" value="HEXAPEP_TRANSFERASES"/>
    <property type="match status" value="1"/>
</dbReference>
<organism>
    <name type="scientific">Klebsiella pneumoniae subsp. pneumoniae (strain ATCC 700721 / MGH 78578)</name>
    <dbReference type="NCBI Taxonomy" id="272620"/>
    <lineage>
        <taxon>Bacteria</taxon>
        <taxon>Pseudomonadati</taxon>
        <taxon>Pseudomonadota</taxon>
        <taxon>Gammaproteobacteria</taxon>
        <taxon>Enterobacterales</taxon>
        <taxon>Enterobacteriaceae</taxon>
        <taxon>Klebsiella/Raoultella group</taxon>
        <taxon>Klebsiella</taxon>
        <taxon>Klebsiella pneumoniae complex</taxon>
    </lineage>
</organism>
<sequence>MQQLQNVIESAFERRADITPANVDTVTREAVNQVIALLDSGALRVAEKIDGQWVTHQWLKKAVLLSFRINDNQVIDGAESRYFDKVPMKFADYDEARFQKEGFRVVPPAAVRQGAFIARNTVLMPSYVNIGAYVDEGTMVDTWATVGSCAQIGKNVHLSGGVGIGGVLEPLQANPTIIEDNCFIGARSEVVEGVIVEEGSVISMGVYLGQSTKIYDRETGEVFYGRVPAGSVVVSGNLPSKDGKYSLYCAVIVKKVDAKTRGKVGINELLRTID</sequence>
<name>DAPD_KLEP7</name>
<accession>A6T4W8</accession>
<gene>
    <name evidence="1" type="primary">dapD</name>
    <name type="ordered locus">KPN78578_01780</name>
    <name type="ORF">KPN_00179</name>
</gene>
<comment type="catalytic activity">
    <reaction evidence="1">
        <text>(S)-2,3,4,5-tetrahydrodipicolinate + succinyl-CoA + H2O = (S)-2-succinylamino-6-oxoheptanedioate + CoA</text>
        <dbReference type="Rhea" id="RHEA:17325"/>
        <dbReference type="ChEBI" id="CHEBI:15377"/>
        <dbReference type="ChEBI" id="CHEBI:15685"/>
        <dbReference type="ChEBI" id="CHEBI:16845"/>
        <dbReference type="ChEBI" id="CHEBI:57287"/>
        <dbReference type="ChEBI" id="CHEBI:57292"/>
        <dbReference type="EC" id="2.3.1.117"/>
    </reaction>
</comment>
<comment type="pathway">
    <text evidence="1">Amino-acid biosynthesis; L-lysine biosynthesis via DAP pathway; LL-2,6-diaminopimelate from (S)-tetrahydrodipicolinate (succinylase route): step 1/3.</text>
</comment>
<comment type="subunit">
    <text evidence="1">Homotrimer.</text>
</comment>
<comment type="subcellular location">
    <subcellularLocation>
        <location evidence="1">Cytoplasm</location>
    </subcellularLocation>
</comment>
<comment type="similarity">
    <text evidence="1">Belongs to the transferase hexapeptide repeat family.</text>
</comment>
<reference key="1">
    <citation type="submission" date="2006-09" db="EMBL/GenBank/DDBJ databases">
        <authorList>
            <consortium name="The Klebsiella pneumonia Genome Sequencing Project"/>
            <person name="McClelland M."/>
            <person name="Sanderson E.K."/>
            <person name="Spieth J."/>
            <person name="Clifton W.S."/>
            <person name="Latreille P."/>
            <person name="Sabo A."/>
            <person name="Pepin K."/>
            <person name="Bhonagiri V."/>
            <person name="Porwollik S."/>
            <person name="Ali J."/>
            <person name="Wilson R.K."/>
        </authorList>
    </citation>
    <scope>NUCLEOTIDE SEQUENCE [LARGE SCALE GENOMIC DNA]</scope>
    <source>
        <strain>ATCC 700721 / MGH 78578</strain>
    </source>
</reference>
<evidence type="ECO:0000255" key="1">
    <source>
        <dbReference type="HAMAP-Rule" id="MF_00811"/>
    </source>
</evidence>
<proteinExistence type="inferred from homology"/>
<protein>
    <recommendedName>
        <fullName evidence="1">2,3,4,5-tetrahydropyridine-2,6-dicarboxylate N-succinyltransferase</fullName>
        <ecNumber evidence="1">2.3.1.117</ecNumber>
    </recommendedName>
    <alternativeName>
        <fullName evidence="1">Tetrahydrodipicolinate N-succinyltransferase</fullName>
        <shortName evidence="1">THDP succinyltransferase</shortName>
        <shortName evidence="1">THP succinyltransferase</shortName>
        <shortName evidence="1">Tetrahydropicolinate succinylase</shortName>
    </alternativeName>
</protein>
<keyword id="KW-0012">Acyltransferase</keyword>
<keyword id="KW-0028">Amino-acid biosynthesis</keyword>
<keyword id="KW-0963">Cytoplasm</keyword>
<keyword id="KW-0220">Diaminopimelate biosynthesis</keyword>
<keyword id="KW-0457">Lysine biosynthesis</keyword>
<keyword id="KW-0677">Repeat</keyword>
<keyword id="KW-0808">Transferase</keyword>